<evidence type="ECO:0000255" key="1"/>
<evidence type="ECO:0000303" key="2">
    <source>
    </source>
</evidence>
<evidence type="ECO:0000303" key="3">
    <source>
    </source>
</evidence>
<evidence type="ECO:0000305" key="4"/>
<evidence type="ECO:0000305" key="5">
    <source>
    </source>
</evidence>
<protein>
    <recommendedName>
        <fullName evidence="3">Conotoxin Cal22a</fullName>
    </recommendedName>
    <alternativeName>
        <fullName evidence="2">Conotoxin Cl-S1</fullName>
    </alternativeName>
</protein>
<accession>D3JWK2</accession>
<organism>
    <name type="scientific">Californiconus californicus</name>
    <name type="common">California cone</name>
    <name type="synonym">Conus californicus</name>
    <dbReference type="NCBI Taxonomy" id="1736779"/>
    <lineage>
        <taxon>Eukaryota</taxon>
        <taxon>Metazoa</taxon>
        <taxon>Spiralia</taxon>
        <taxon>Lophotrochozoa</taxon>
        <taxon>Mollusca</taxon>
        <taxon>Gastropoda</taxon>
        <taxon>Caenogastropoda</taxon>
        <taxon>Neogastropoda</taxon>
        <taxon>Conoidea</taxon>
        <taxon>Conidae</taxon>
        <taxon>Californiconus</taxon>
    </lineage>
</organism>
<feature type="signal peptide" evidence="1">
    <location>
        <begin position="1"/>
        <end position="24"/>
    </location>
</feature>
<feature type="propeptide" id="PRO_5000570813" evidence="5">
    <location>
        <begin position="25"/>
        <end position="44"/>
    </location>
</feature>
<feature type="peptide" id="PRO_5000666520" description="Conotoxin Cal22a" evidence="5">
    <location>
        <begin position="46"/>
        <end position="92"/>
    </location>
</feature>
<proteinExistence type="inferred from homology"/>
<reference key="1">
    <citation type="journal article" date="2010" name="Mol. Phylogenet. Evol.">
        <title>Evolution of Conus peptide toxins: analysis of Conus californicus Reeve, 1844.</title>
        <authorList>
            <person name="Biggs J.S."/>
            <person name="Watkins M."/>
            <person name="Puillandre N."/>
            <person name="Ownby J.P."/>
            <person name="Lopez-Vera E."/>
            <person name="Christensen S."/>
            <person name="Moreno K.J."/>
            <person name="Bernaldez J."/>
            <person name="Licea-Navarro A."/>
            <person name="Corneli P.S."/>
            <person name="Olivera B.M."/>
        </authorList>
    </citation>
    <scope>NUCLEOTIDE SEQUENCE [GENOMIC DNA]</scope>
</reference>
<reference key="2">
    <citation type="journal article" date="2011" name="Toxicon">
        <title>Diversity of conotoxin types from Conus californicus reflects a diversity of prey types and a novel evolutionary history.</title>
        <authorList>
            <person name="Elliger C.A."/>
            <person name="Richmond T.A."/>
            <person name="Lebaric Z.N."/>
            <person name="Pierce N.T."/>
            <person name="Sweedler J.V."/>
            <person name="Gilly W.F."/>
        </authorList>
    </citation>
    <scope>NUCLEOTIDE SEQUENCE [MRNA]</scope>
    <source>
        <tissue>Venom duct</tissue>
    </source>
</reference>
<sequence>MMSTKGITLFLCLLLLALATSVNGGQGTRRSRMTRALHGGRPSARYDAPYCSQEEVRECHDDCSGNPVRDACQCAYDPAGSPACDCYCVEPWRR</sequence>
<comment type="function">
    <text evidence="4">Probable neurotoxin with unknown target. Possibly targets ion channels.</text>
</comment>
<comment type="subcellular location">
    <subcellularLocation>
        <location evidence="5">Secreted</location>
    </subcellularLocation>
</comment>
<comment type="tissue specificity">
    <text evidence="5">Expressed by the venom duct.</text>
</comment>
<comment type="domain">
    <text>The cysteine framework is XXII (C-C-C-C-C-C-C-C).</text>
</comment>
<comment type="PTM">
    <text evidence="4">Contains 4 disulfide bonds.</text>
</comment>
<dbReference type="EMBL" id="FJ959115">
    <property type="protein sequence ID" value="ADB93085.1"/>
    <property type="molecule type" value="Genomic_DNA"/>
</dbReference>
<dbReference type="EMBL" id="GU324074">
    <property type="protein sequence ID" value="ADB95946.1"/>
    <property type="molecule type" value="mRNA"/>
</dbReference>
<dbReference type="ConoServer" id="4001">
    <property type="toxin name" value="Cal22a precursor"/>
</dbReference>
<dbReference type="GO" id="GO:0005576">
    <property type="term" value="C:extracellular region"/>
    <property type="evidence" value="ECO:0007669"/>
    <property type="project" value="UniProtKB-SubCell"/>
</dbReference>
<dbReference type="GO" id="GO:0099106">
    <property type="term" value="F:ion channel regulator activity"/>
    <property type="evidence" value="ECO:0007669"/>
    <property type="project" value="UniProtKB-KW"/>
</dbReference>
<dbReference type="GO" id="GO:0090729">
    <property type="term" value="F:toxin activity"/>
    <property type="evidence" value="ECO:0007669"/>
    <property type="project" value="UniProtKB-KW"/>
</dbReference>
<keyword id="KW-1015">Disulfide bond</keyword>
<keyword id="KW-0872">Ion channel impairing toxin</keyword>
<keyword id="KW-0528">Neurotoxin</keyword>
<keyword id="KW-0964">Secreted</keyword>
<keyword id="KW-0732">Signal</keyword>
<keyword id="KW-0800">Toxin</keyword>
<name>CUMA_CONCL</name>